<proteinExistence type="inferred from homology"/>
<comment type="function">
    <text evidence="1">Catalyzes the attachment of serine to tRNA(Ser). Is also able to aminoacylate tRNA(Sec) with serine, to form the misacylated tRNA L-seryl-tRNA(Sec), which will be further converted into selenocysteinyl-tRNA(Sec).</text>
</comment>
<comment type="catalytic activity">
    <reaction evidence="1">
        <text>tRNA(Ser) + L-serine + ATP = L-seryl-tRNA(Ser) + AMP + diphosphate + H(+)</text>
        <dbReference type="Rhea" id="RHEA:12292"/>
        <dbReference type="Rhea" id="RHEA-COMP:9669"/>
        <dbReference type="Rhea" id="RHEA-COMP:9703"/>
        <dbReference type="ChEBI" id="CHEBI:15378"/>
        <dbReference type="ChEBI" id="CHEBI:30616"/>
        <dbReference type="ChEBI" id="CHEBI:33019"/>
        <dbReference type="ChEBI" id="CHEBI:33384"/>
        <dbReference type="ChEBI" id="CHEBI:78442"/>
        <dbReference type="ChEBI" id="CHEBI:78533"/>
        <dbReference type="ChEBI" id="CHEBI:456215"/>
        <dbReference type="EC" id="6.1.1.11"/>
    </reaction>
</comment>
<comment type="catalytic activity">
    <reaction evidence="1">
        <text>tRNA(Sec) + L-serine + ATP = L-seryl-tRNA(Sec) + AMP + diphosphate + H(+)</text>
        <dbReference type="Rhea" id="RHEA:42580"/>
        <dbReference type="Rhea" id="RHEA-COMP:9742"/>
        <dbReference type="Rhea" id="RHEA-COMP:10128"/>
        <dbReference type="ChEBI" id="CHEBI:15378"/>
        <dbReference type="ChEBI" id="CHEBI:30616"/>
        <dbReference type="ChEBI" id="CHEBI:33019"/>
        <dbReference type="ChEBI" id="CHEBI:33384"/>
        <dbReference type="ChEBI" id="CHEBI:78442"/>
        <dbReference type="ChEBI" id="CHEBI:78533"/>
        <dbReference type="ChEBI" id="CHEBI:456215"/>
        <dbReference type="EC" id="6.1.1.11"/>
    </reaction>
</comment>
<comment type="pathway">
    <text evidence="1">Aminoacyl-tRNA biosynthesis; selenocysteinyl-tRNA(Sec) biosynthesis; L-seryl-tRNA(Sec) from L-serine and tRNA(Sec): step 1/1.</text>
</comment>
<comment type="subunit">
    <text evidence="1">Homodimer. The tRNA molecule binds across the dimer.</text>
</comment>
<comment type="subcellular location">
    <subcellularLocation>
        <location evidence="1">Cytoplasm</location>
    </subcellularLocation>
</comment>
<comment type="domain">
    <text evidence="1">Consists of two distinct domains, a catalytic core and a N-terminal extension that is involved in tRNA binding.</text>
</comment>
<comment type="similarity">
    <text evidence="1">Belongs to the class-II aminoacyl-tRNA synthetase family. Type-1 seryl-tRNA synthetase subfamily.</text>
</comment>
<name>SYS_THEAB</name>
<protein>
    <recommendedName>
        <fullName evidence="1">Serine--tRNA ligase</fullName>
        <ecNumber evidence="1">6.1.1.11</ecNumber>
    </recommendedName>
    <alternativeName>
        <fullName evidence="1">Seryl-tRNA synthetase</fullName>
        <shortName evidence="1">SerRS</shortName>
    </alternativeName>
    <alternativeName>
        <fullName evidence="1">Seryl-tRNA(Ser/Sec) synthetase</fullName>
    </alternativeName>
</protein>
<gene>
    <name evidence="1" type="primary">serS</name>
    <name type="ordered locus">THA_487</name>
</gene>
<feature type="chain" id="PRO_1000199513" description="Serine--tRNA ligase">
    <location>
        <begin position="1"/>
        <end position="426"/>
    </location>
</feature>
<feature type="binding site" evidence="1">
    <location>
        <begin position="233"/>
        <end position="235"/>
    </location>
    <ligand>
        <name>L-serine</name>
        <dbReference type="ChEBI" id="CHEBI:33384"/>
    </ligand>
</feature>
<feature type="binding site" evidence="1">
    <location>
        <begin position="264"/>
        <end position="266"/>
    </location>
    <ligand>
        <name>ATP</name>
        <dbReference type="ChEBI" id="CHEBI:30616"/>
    </ligand>
</feature>
<feature type="binding site" evidence="1">
    <location>
        <position position="287"/>
    </location>
    <ligand>
        <name>L-serine</name>
        <dbReference type="ChEBI" id="CHEBI:33384"/>
    </ligand>
</feature>
<feature type="binding site" evidence="1">
    <location>
        <begin position="351"/>
        <end position="354"/>
    </location>
    <ligand>
        <name>ATP</name>
        <dbReference type="ChEBI" id="CHEBI:30616"/>
    </ligand>
</feature>
<feature type="binding site" evidence="1">
    <location>
        <position position="386"/>
    </location>
    <ligand>
        <name>L-serine</name>
        <dbReference type="ChEBI" id="CHEBI:33384"/>
    </ligand>
</feature>
<dbReference type="EC" id="6.1.1.11" evidence="1"/>
<dbReference type="EMBL" id="CP001185">
    <property type="protein sequence ID" value="ACJ74978.1"/>
    <property type="molecule type" value="Genomic_DNA"/>
</dbReference>
<dbReference type="RefSeq" id="WP_012579613.1">
    <property type="nucleotide sequence ID" value="NC_011653.1"/>
</dbReference>
<dbReference type="SMR" id="B7IFW4"/>
<dbReference type="STRING" id="484019.THA_487"/>
<dbReference type="KEGG" id="taf:THA_487"/>
<dbReference type="eggNOG" id="COG0172">
    <property type="taxonomic scope" value="Bacteria"/>
</dbReference>
<dbReference type="HOGENOM" id="CLU_023797_1_1_0"/>
<dbReference type="OrthoDB" id="9804647at2"/>
<dbReference type="UniPathway" id="UPA00906">
    <property type="reaction ID" value="UER00895"/>
</dbReference>
<dbReference type="Proteomes" id="UP000002453">
    <property type="component" value="Chromosome"/>
</dbReference>
<dbReference type="GO" id="GO:0005737">
    <property type="term" value="C:cytoplasm"/>
    <property type="evidence" value="ECO:0007669"/>
    <property type="project" value="UniProtKB-SubCell"/>
</dbReference>
<dbReference type="GO" id="GO:0005524">
    <property type="term" value="F:ATP binding"/>
    <property type="evidence" value="ECO:0007669"/>
    <property type="project" value="UniProtKB-UniRule"/>
</dbReference>
<dbReference type="GO" id="GO:0004828">
    <property type="term" value="F:serine-tRNA ligase activity"/>
    <property type="evidence" value="ECO:0007669"/>
    <property type="project" value="UniProtKB-UniRule"/>
</dbReference>
<dbReference type="GO" id="GO:0016260">
    <property type="term" value="P:selenocysteine biosynthetic process"/>
    <property type="evidence" value="ECO:0007669"/>
    <property type="project" value="UniProtKB-UniRule"/>
</dbReference>
<dbReference type="GO" id="GO:0006434">
    <property type="term" value="P:seryl-tRNA aminoacylation"/>
    <property type="evidence" value="ECO:0007669"/>
    <property type="project" value="UniProtKB-UniRule"/>
</dbReference>
<dbReference type="CDD" id="cd00770">
    <property type="entry name" value="SerRS_core"/>
    <property type="match status" value="1"/>
</dbReference>
<dbReference type="Gene3D" id="3.30.930.10">
    <property type="entry name" value="Bira Bifunctional Protein, Domain 2"/>
    <property type="match status" value="1"/>
</dbReference>
<dbReference type="Gene3D" id="1.10.287.40">
    <property type="entry name" value="Serine-tRNA synthetase, tRNA binding domain"/>
    <property type="match status" value="1"/>
</dbReference>
<dbReference type="HAMAP" id="MF_00176">
    <property type="entry name" value="Ser_tRNA_synth_type1"/>
    <property type="match status" value="1"/>
</dbReference>
<dbReference type="InterPro" id="IPR002314">
    <property type="entry name" value="aa-tRNA-synt_IIb"/>
</dbReference>
<dbReference type="InterPro" id="IPR006195">
    <property type="entry name" value="aa-tRNA-synth_II"/>
</dbReference>
<dbReference type="InterPro" id="IPR045864">
    <property type="entry name" value="aa-tRNA-synth_II/BPL/LPL"/>
</dbReference>
<dbReference type="InterPro" id="IPR002317">
    <property type="entry name" value="Ser-tRNA-ligase_type_1"/>
</dbReference>
<dbReference type="InterPro" id="IPR015866">
    <property type="entry name" value="Ser-tRNA-synth_1_N"/>
</dbReference>
<dbReference type="InterPro" id="IPR042103">
    <property type="entry name" value="SerRS_1_N_sf"/>
</dbReference>
<dbReference type="InterPro" id="IPR033729">
    <property type="entry name" value="SerRS_core"/>
</dbReference>
<dbReference type="InterPro" id="IPR010978">
    <property type="entry name" value="tRNA-bd_arm"/>
</dbReference>
<dbReference type="NCBIfam" id="TIGR00414">
    <property type="entry name" value="serS"/>
    <property type="match status" value="1"/>
</dbReference>
<dbReference type="PANTHER" id="PTHR43697:SF1">
    <property type="entry name" value="SERINE--TRNA LIGASE"/>
    <property type="match status" value="1"/>
</dbReference>
<dbReference type="PANTHER" id="PTHR43697">
    <property type="entry name" value="SERYL-TRNA SYNTHETASE"/>
    <property type="match status" value="1"/>
</dbReference>
<dbReference type="Pfam" id="PF02403">
    <property type="entry name" value="Seryl_tRNA_N"/>
    <property type="match status" value="1"/>
</dbReference>
<dbReference type="Pfam" id="PF00587">
    <property type="entry name" value="tRNA-synt_2b"/>
    <property type="match status" value="1"/>
</dbReference>
<dbReference type="PIRSF" id="PIRSF001529">
    <property type="entry name" value="Ser-tRNA-synth_IIa"/>
    <property type="match status" value="1"/>
</dbReference>
<dbReference type="PRINTS" id="PR00981">
    <property type="entry name" value="TRNASYNTHSER"/>
</dbReference>
<dbReference type="SUPFAM" id="SSF55681">
    <property type="entry name" value="Class II aaRS and biotin synthetases"/>
    <property type="match status" value="1"/>
</dbReference>
<dbReference type="SUPFAM" id="SSF46589">
    <property type="entry name" value="tRNA-binding arm"/>
    <property type="match status" value="1"/>
</dbReference>
<dbReference type="PROSITE" id="PS50862">
    <property type="entry name" value="AA_TRNA_LIGASE_II"/>
    <property type="match status" value="1"/>
</dbReference>
<reference key="1">
    <citation type="journal article" date="2009" name="J. Bacteriol.">
        <title>The genome of Thermosipho africanus TCF52B: lateral genetic connections to the Firmicutes and Archaea.</title>
        <authorList>
            <person name="Nesboe C.L."/>
            <person name="Bapteste E."/>
            <person name="Curtis B."/>
            <person name="Dahle H."/>
            <person name="Lopez P."/>
            <person name="Macleod D."/>
            <person name="Dlutek M."/>
            <person name="Bowman S."/>
            <person name="Zhaxybayeva O."/>
            <person name="Birkeland N.-K."/>
            <person name="Doolittle W.F."/>
        </authorList>
    </citation>
    <scope>NUCLEOTIDE SEQUENCE [LARGE SCALE GENOMIC DNA]</scope>
    <source>
        <strain>TCF52B</strain>
    </source>
</reference>
<keyword id="KW-0030">Aminoacyl-tRNA synthetase</keyword>
<keyword id="KW-0067">ATP-binding</keyword>
<keyword id="KW-0963">Cytoplasm</keyword>
<keyword id="KW-0436">Ligase</keyword>
<keyword id="KW-0547">Nucleotide-binding</keyword>
<keyword id="KW-0648">Protein biosynthesis</keyword>
<keyword id="KW-1185">Reference proteome</keyword>
<evidence type="ECO:0000255" key="1">
    <source>
        <dbReference type="HAMAP-Rule" id="MF_00176"/>
    </source>
</evidence>
<accession>B7IFW4</accession>
<organism>
    <name type="scientific">Thermosipho africanus (strain TCF52B)</name>
    <dbReference type="NCBI Taxonomy" id="484019"/>
    <lineage>
        <taxon>Bacteria</taxon>
        <taxon>Thermotogati</taxon>
        <taxon>Thermotogota</taxon>
        <taxon>Thermotogae</taxon>
        <taxon>Thermotogales</taxon>
        <taxon>Fervidobacteriaceae</taxon>
        <taxon>Thermosipho</taxon>
    </lineage>
</organism>
<sequence length="426" mass="49400">MIDVKLLRKNPEIFYDAIKKRNMDTEIIDKILEVDKEWRELVAKVNELKAKRNEFSKLVAKAKVEKDNEKASKLIEESKKIGEEIKKIEEQEKKLEEEMQNLALNIPNIPAEDVPFGKDESENIEIRRWGEPRKFDFEPKAHWDLGPELSMMDFERGAKLSGSRFTVLYSYLARLERALIQFMLDVHTKEHGYTEVWVPQLVKRDAMLWTGKLPKFEEDAYCIEKDDMFLIPTAEVPLVALHAQEILSEKDLPIKYTAYSACYRREAGSYGKDVRGMIRQHQFDKVELVWITTPERSFEDLERLTQDAERILQLLELPYRVVSLCSGDLGFVSAKTYDIEVWLPSYNSYKEISSCSNTTDFQTRRSNIRYRGSDNKLHYAHALNGSGLAVGRTLVAIVENYQNEDGSITVPKVLVPYMGVEKIEVK</sequence>